<sequence>MFRLLLLALSCLESTVFMASVSISRSKPVGIVGGQRTPPGKWPWQVSLRMYSYEVNSWVHICGGSIIHPQWILTAAHCIQSQDADPAVYRVQVGEVYLYKEQELLNISRIIIHPDYNDVSKRFDLALMQLTALLVTSTNVSPVSLPKDSSTFDSTDQCWLVGWGNLLQRVPLQPPYQLHEVKIPIQDNKSCKRAYRKKSSDEHKAVAIFDDMLCAGTSGRGPCFGDSGGPLVCWKSNKWIQVGVVSKGIDCSNNLPSIFSRVQSSLAWIHQHIQ</sequence>
<evidence type="ECO:0000250" key="1"/>
<evidence type="ECO:0000255" key="2"/>
<evidence type="ECO:0000255" key="3">
    <source>
        <dbReference type="PROSITE-ProRule" id="PRU00274"/>
    </source>
</evidence>
<evidence type="ECO:0000269" key="4">
    <source>
    </source>
</evidence>
<evidence type="ECO:0000269" key="5">
    <source>
    </source>
</evidence>
<evidence type="ECO:0000269" key="6">
    <source>
    </source>
</evidence>
<evidence type="ECO:0000269" key="7">
    <source>
    </source>
</evidence>
<evidence type="ECO:0000269" key="8">
    <source>
    </source>
</evidence>
<evidence type="ECO:0000305" key="9"/>
<keyword id="KW-1015">Disulfide bond</keyword>
<keyword id="KW-0325">Glycoprotein</keyword>
<keyword id="KW-0378">Hydrolase</keyword>
<keyword id="KW-0645">Protease</keyword>
<keyword id="KW-1185">Reference proteome</keyword>
<keyword id="KW-0964">Secreted</keyword>
<keyword id="KW-0720">Serine protease</keyword>
<keyword id="KW-0732">Signal</keyword>
<gene>
    <name type="primary">Prss28</name>
    <name type="synonym">Isp1</name>
</gene>
<name>PRS28_MOUSE</name>
<reference key="1">
    <citation type="journal article" date="2001" name="Reproduction">
        <title>A novel murine tryptase involved in blastocyst hatching and outgrowth.</title>
        <authorList>
            <person name="O'Sullivan C.M."/>
            <person name="Rancourt S.L."/>
            <person name="Liu S.Y."/>
            <person name="Rancourt D.E."/>
        </authorList>
    </citation>
    <scope>NUCLEOTIDE SEQUENCE [MRNA]</scope>
    <scope>TISSUE SPECIFICITY</scope>
    <scope>DEVELOPMENTAL STAGE</scope>
    <scope>FUNCTION</scope>
    <source>
        <strain>129/SvJ</strain>
        <strain>CD-1</strain>
    </source>
</reference>
<reference key="2">
    <citation type="journal article" date="2004" name="Mol. Reprod. Dev.">
        <title>Origin of the murine implantation serine proteinase subfamily.</title>
        <authorList>
            <person name="O'Sullivan C.M."/>
            <person name="Tang L."/>
            <person name="Xu H."/>
            <person name="Liu S."/>
            <person name="Rancourt D.E."/>
        </authorList>
    </citation>
    <scope>NUCLEOTIDE SEQUENCE [GENOMIC DNA]</scope>
    <scope>TISSUE SPECIFICITY</scope>
    <scope>DEVELOPMENTAL TISSUE SPECIFICITY</scope>
    <scope>FUNCTION</scope>
    <scope>REGULATION BY PROGESTERONE</scope>
    <scope>SUBUNIT</scope>
</reference>
<reference key="3">
    <citation type="journal article" date="2005" name="Science">
        <title>The transcriptional landscape of the mammalian genome.</title>
        <authorList>
            <person name="Carninci P."/>
            <person name="Kasukawa T."/>
            <person name="Katayama S."/>
            <person name="Gough J."/>
            <person name="Frith M.C."/>
            <person name="Maeda N."/>
            <person name="Oyama R."/>
            <person name="Ravasi T."/>
            <person name="Lenhard B."/>
            <person name="Wells C."/>
            <person name="Kodzius R."/>
            <person name="Shimokawa K."/>
            <person name="Bajic V.B."/>
            <person name="Brenner S.E."/>
            <person name="Batalov S."/>
            <person name="Forrest A.R."/>
            <person name="Zavolan M."/>
            <person name="Davis M.J."/>
            <person name="Wilming L.G."/>
            <person name="Aidinis V."/>
            <person name="Allen J.E."/>
            <person name="Ambesi-Impiombato A."/>
            <person name="Apweiler R."/>
            <person name="Aturaliya R.N."/>
            <person name="Bailey T.L."/>
            <person name="Bansal M."/>
            <person name="Baxter L."/>
            <person name="Beisel K.W."/>
            <person name="Bersano T."/>
            <person name="Bono H."/>
            <person name="Chalk A.M."/>
            <person name="Chiu K.P."/>
            <person name="Choudhary V."/>
            <person name="Christoffels A."/>
            <person name="Clutterbuck D.R."/>
            <person name="Crowe M.L."/>
            <person name="Dalla E."/>
            <person name="Dalrymple B.P."/>
            <person name="de Bono B."/>
            <person name="Della Gatta G."/>
            <person name="di Bernardo D."/>
            <person name="Down T."/>
            <person name="Engstrom P."/>
            <person name="Fagiolini M."/>
            <person name="Faulkner G."/>
            <person name="Fletcher C.F."/>
            <person name="Fukushima T."/>
            <person name="Furuno M."/>
            <person name="Futaki S."/>
            <person name="Gariboldi M."/>
            <person name="Georgii-Hemming P."/>
            <person name="Gingeras T.R."/>
            <person name="Gojobori T."/>
            <person name="Green R.E."/>
            <person name="Gustincich S."/>
            <person name="Harbers M."/>
            <person name="Hayashi Y."/>
            <person name="Hensch T.K."/>
            <person name="Hirokawa N."/>
            <person name="Hill D."/>
            <person name="Huminiecki L."/>
            <person name="Iacono M."/>
            <person name="Ikeo K."/>
            <person name="Iwama A."/>
            <person name="Ishikawa T."/>
            <person name="Jakt M."/>
            <person name="Kanapin A."/>
            <person name="Katoh M."/>
            <person name="Kawasawa Y."/>
            <person name="Kelso J."/>
            <person name="Kitamura H."/>
            <person name="Kitano H."/>
            <person name="Kollias G."/>
            <person name="Krishnan S.P."/>
            <person name="Kruger A."/>
            <person name="Kummerfeld S.K."/>
            <person name="Kurochkin I.V."/>
            <person name="Lareau L.F."/>
            <person name="Lazarevic D."/>
            <person name="Lipovich L."/>
            <person name="Liu J."/>
            <person name="Liuni S."/>
            <person name="McWilliam S."/>
            <person name="Madan Babu M."/>
            <person name="Madera M."/>
            <person name="Marchionni L."/>
            <person name="Matsuda H."/>
            <person name="Matsuzawa S."/>
            <person name="Miki H."/>
            <person name="Mignone F."/>
            <person name="Miyake S."/>
            <person name="Morris K."/>
            <person name="Mottagui-Tabar S."/>
            <person name="Mulder N."/>
            <person name="Nakano N."/>
            <person name="Nakauchi H."/>
            <person name="Ng P."/>
            <person name="Nilsson R."/>
            <person name="Nishiguchi S."/>
            <person name="Nishikawa S."/>
            <person name="Nori F."/>
            <person name="Ohara O."/>
            <person name="Okazaki Y."/>
            <person name="Orlando V."/>
            <person name="Pang K.C."/>
            <person name="Pavan W.J."/>
            <person name="Pavesi G."/>
            <person name="Pesole G."/>
            <person name="Petrovsky N."/>
            <person name="Piazza S."/>
            <person name="Reed J."/>
            <person name="Reid J.F."/>
            <person name="Ring B.Z."/>
            <person name="Ringwald M."/>
            <person name="Rost B."/>
            <person name="Ruan Y."/>
            <person name="Salzberg S.L."/>
            <person name="Sandelin A."/>
            <person name="Schneider C."/>
            <person name="Schoenbach C."/>
            <person name="Sekiguchi K."/>
            <person name="Semple C.A."/>
            <person name="Seno S."/>
            <person name="Sessa L."/>
            <person name="Sheng Y."/>
            <person name="Shibata Y."/>
            <person name="Shimada H."/>
            <person name="Shimada K."/>
            <person name="Silva D."/>
            <person name="Sinclair B."/>
            <person name="Sperling S."/>
            <person name="Stupka E."/>
            <person name="Sugiura K."/>
            <person name="Sultana R."/>
            <person name="Takenaka Y."/>
            <person name="Taki K."/>
            <person name="Tammoja K."/>
            <person name="Tan S.L."/>
            <person name="Tang S."/>
            <person name="Taylor M.S."/>
            <person name="Tegner J."/>
            <person name="Teichmann S.A."/>
            <person name="Ueda H.R."/>
            <person name="van Nimwegen E."/>
            <person name="Verardo R."/>
            <person name="Wei C.L."/>
            <person name="Yagi K."/>
            <person name="Yamanishi H."/>
            <person name="Zabarovsky E."/>
            <person name="Zhu S."/>
            <person name="Zimmer A."/>
            <person name="Hide W."/>
            <person name="Bult C."/>
            <person name="Grimmond S.M."/>
            <person name="Teasdale R.D."/>
            <person name="Liu E.T."/>
            <person name="Brusic V."/>
            <person name="Quackenbush J."/>
            <person name="Wahlestedt C."/>
            <person name="Mattick J.S."/>
            <person name="Hume D.A."/>
            <person name="Kai C."/>
            <person name="Sasaki D."/>
            <person name="Tomaru Y."/>
            <person name="Fukuda S."/>
            <person name="Kanamori-Katayama M."/>
            <person name="Suzuki M."/>
            <person name="Aoki J."/>
            <person name="Arakawa T."/>
            <person name="Iida J."/>
            <person name="Imamura K."/>
            <person name="Itoh M."/>
            <person name="Kato T."/>
            <person name="Kawaji H."/>
            <person name="Kawagashira N."/>
            <person name="Kawashima T."/>
            <person name="Kojima M."/>
            <person name="Kondo S."/>
            <person name="Konno H."/>
            <person name="Nakano K."/>
            <person name="Ninomiya N."/>
            <person name="Nishio T."/>
            <person name="Okada M."/>
            <person name="Plessy C."/>
            <person name="Shibata K."/>
            <person name="Shiraki T."/>
            <person name="Suzuki S."/>
            <person name="Tagami M."/>
            <person name="Waki K."/>
            <person name="Watahiki A."/>
            <person name="Okamura-Oho Y."/>
            <person name="Suzuki H."/>
            <person name="Kawai J."/>
            <person name="Hayashizaki Y."/>
        </authorList>
    </citation>
    <scope>NUCLEOTIDE SEQUENCE [LARGE SCALE MRNA]</scope>
    <source>
        <strain>C57BL/6J</strain>
        <tissue>Ovary</tissue>
        <tissue>Uterus</tissue>
    </source>
</reference>
<reference key="4">
    <citation type="journal article" date="2004" name="Genome Res.">
        <title>The status, quality, and expansion of the NIH full-length cDNA project: the Mammalian Gene Collection (MGC).</title>
        <authorList>
            <consortium name="The MGC Project Team"/>
        </authorList>
    </citation>
    <scope>NUCLEOTIDE SEQUENCE [LARGE SCALE MRNA]</scope>
    <source>
        <tissue>Brain</tissue>
    </source>
</reference>
<reference key="5">
    <citation type="journal article" date="2002" name="Mol. Reprod. Dev.">
        <title>Embryonic hatching enzyme strypsin/ISP1 is expressed with ISP2 in endometrial glands during implantation.</title>
        <authorList>
            <person name="O'Sullivan C.M."/>
            <person name="Liu S.Y."/>
            <person name="Karpinka J.B."/>
            <person name="Rancourt D.E."/>
        </authorList>
    </citation>
    <scope>TISSUE SPECIFICITY</scope>
    <scope>SUBCELLULAR LOCATION</scope>
    <scope>REGULATION BY PROGESTERONE</scope>
    <scope>SUBUNITS</scope>
</reference>
<reference key="6">
    <citation type="journal article" date="2004" name="Mol. Reprod. Dev.">
        <title>Uterine secretion of ISP1 &amp; 2 tryptases is regulated by progesterone and estrogen during pregnancy and the endometrial cycle.</title>
        <authorList>
            <person name="O'Sullivan C.M."/>
            <person name="Ungarian J.L."/>
            <person name="Singh K."/>
            <person name="Liu S."/>
            <person name="Hance J."/>
            <person name="Rancourt D.E."/>
        </authorList>
    </citation>
    <scope>SUBCELLULAR LOCATION</scope>
    <scope>REGULATION BY PROGESTERONE</scope>
    <scope>SUBUNITS</scope>
    <scope>DEVELOPMENTAL STAGE</scope>
</reference>
<reference key="7">
    <citation type="journal article" date="2006" name="BMC Dev. Biol.">
        <title>Implantation serine proteinases heterodimerize and are critical in hatching and implantation.</title>
        <authorList>
            <person name="Sharma N."/>
            <person name="Liu S."/>
            <person name="Tang L."/>
            <person name="Irwin J."/>
            <person name="Meng G."/>
            <person name="Rancourt D.E."/>
        </authorList>
    </citation>
    <scope>SUBUNITS</scope>
    <scope>ACTIVITY REGULATION</scope>
    <scope>FUNCTION</scope>
</reference>
<comment type="function">
    <text evidence="4 6 8">Involved in embryo hatching and implantation.</text>
</comment>
<comment type="activity regulation">
    <text evidence="8">Inhibited by benzamidine, (4-amidino-phenyl)-methane-sulfonyl (APMSF), N-p-tosyl-L-lysine chloromethylketone (TLCK), gabexate, mesylate, BABIM and trypsin soybean inhibitor (TSI).</text>
</comment>
<comment type="subunit">
    <text evidence="5 6 7 8">Homooligomer, heterodimer and heterotetramer. Able to form homo- and hetero- tetrameric structures. Heterotetramer is far more stable than the homotetramer.</text>
</comment>
<comment type="subcellular location">
    <subcellularLocation>
        <location evidence="9">Secreted</location>
    </subcellularLocation>
    <text evidence="5 7">Secretion into the glandular and uterine lumen may occur as a consequence of progesterone-induced epithelial differentiation.</text>
</comment>
<comment type="tissue specificity">
    <text evidence="4 5 6">Expressed in embryos throughout the preimplantation period, during blastocyst hatching and embryo outgrowth. Found in uterus especially in glandular epithelium.</text>
</comment>
<comment type="developmental stage">
    <text evidence="4 7">Highly expressed from 6.5 dpc in embryo plus deciduum. Faintly detectable at 11.5 dpc and 13.5 dpc in placenta. Not detected at 8.5 dpc, 11.5 dpc and 13.5 dpc in embryo proper. Expressed at 4.0 dpc in uterus.</text>
</comment>
<comment type="induction">
    <text>By progesterone.</text>
</comment>
<comment type="similarity">
    <text evidence="3">Belongs to the peptidase S1 family.</text>
</comment>
<protein>
    <recommendedName>
        <fullName>Serine protease 28</fullName>
        <ecNumber>3.4.21.-</ecNumber>
    </recommendedName>
    <alternativeName>
        <fullName>Implantation serine proteinase 1</fullName>
        <shortName>ISP-1</shortName>
    </alternativeName>
    <alternativeName>
        <fullName>Strypsin</fullName>
    </alternativeName>
    <alternativeName>
        <fullName>Tryptase-like proteinase</fullName>
    </alternativeName>
</protein>
<accession>Q924N9</accession>
<accession>Q3UN30</accession>
<dbReference type="EC" id="3.4.21.-"/>
<dbReference type="EMBL" id="AF184895">
    <property type="protein sequence ID" value="AAK84171.1"/>
    <property type="molecule type" value="mRNA"/>
</dbReference>
<dbReference type="EMBL" id="AY520825">
    <property type="protein sequence ID" value="AAT66743.1"/>
    <property type="molecule type" value="Genomic_DNA"/>
</dbReference>
<dbReference type="EMBL" id="AK144498">
    <property type="protein sequence ID" value="BAE25918.1"/>
    <property type="molecule type" value="mRNA"/>
</dbReference>
<dbReference type="EMBL" id="BC119386">
    <property type="protein sequence ID" value="AAI19387.1"/>
    <property type="molecule type" value="mRNA"/>
</dbReference>
<dbReference type="EMBL" id="BC119388">
    <property type="protein sequence ID" value="AAI19389.1"/>
    <property type="molecule type" value="mRNA"/>
</dbReference>
<dbReference type="CCDS" id="CCDS28515.1"/>
<dbReference type="RefSeq" id="NP_444489.2">
    <property type="nucleotide sequence ID" value="NM_053259.2"/>
</dbReference>
<dbReference type="SMR" id="Q924N9"/>
<dbReference type="FunCoup" id="Q924N9">
    <property type="interactions" value="60"/>
</dbReference>
<dbReference type="STRING" id="10090.ENSMUSP00000015267"/>
<dbReference type="MEROPS" id="S01.314"/>
<dbReference type="GlyCosmos" id="Q924N9">
    <property type="glycosylation" value="1 site, No reported glycans"/>
</dbReference>
<dbReference type="GlyGen" id="Q924N9">
    <property type="glycosylation" value="1 site"/>
</dbReference>
<dbReference type="PaxDb" id="10090-ENSMUSP00000015267"/>
<dbReference type="ProteomicsDB" id="291899"/>
<dbReference type="DNASU" id="114661"/>
<dbReference type="GeneID" id="114661"/>
<dbReference type="KEGG" id="mmu:114661"/>
<dbReference type="UCSC" id="uc008ban.1">
    <property type="organism name" value="mouse"/>
</dbReference>
<dbReference type="AGR" id="MGI:2149951"/>
<dbReference type="CTD" id="114661"/>
<dbReference type="MGI" id="MGI:2149951">
    <property type="gene designation" value="Prss28"/>
</dbReference>
<dbReference type="eggNOG" id="KOG3627">
    <property type="taxonomic scope" value="Eukaryota"/>
</dbReference>
<dbReference type="InParanoid" id="Q924N9"/>
<dbReference type="OrthoDB" id="93664at2759"/>
<dbReference type="PhylomeDB" id="Q924N9"/>
<dbReference type="TreeFam" id="TF351676"/>
<dbReference type="BioGRID-ORCS" id="114661">
    <property type="hits" value="2 hits in 76 CRISPR screens"/>
</dbReference>
<dbReference type="PRO" id="PR:Q924N9"/>
<dbReference type="Proteomes" id="UP000000589">
    <property type="component" value="Unplaced"/>
</dbReference>
<dbReference type="RNAct" id="Q924N9">
    <property type="molecule type" value="protein"/>
</dbReference>
<dbReference type="GO" id="GO:0005576">
    <property type="term" value="C:extracellular region"/>
    <property type="evidence" value="ECO:0000314"/>
    <property type="project" value="MGI"/>
</dbReference>
<dbReference type="GO" id="GO:0005615">
    <property type="term" value="C:extracellular space"/>
    <property type="evidence" value="ECO:0000314"/>
    <property type="project" value="MGI"/>
</dbReference>
<dbReference type="GO" id="GO:0004252">
    <property type="term" value="F:serine-type endopeptidase activity"/>
    <property type="evidence" value="ECO:0007669"/>
    <property type="project" value="InterPro"/>
</dbReference>
<dbReference type="GO" id="GO:0008236">
    <property type="term" value="F:serine-type peptidase activity"/>
    <property type="evidence" value="ECO:0000314"/>
    <property type="project" value="MGI"/>
</dbReference>
<dbReference type="GO" id="GO:0001835">
    <property type="term" value="P:blastocyst hatching"/>
    <property type="evidence" value="ECO:0000315"/>
    <property type="project" value="MGI"/>
</dbReference>
<dbReference type="GO" id="GO:0007566">
    <property type="term" value="P:embryo implantation"/>
    <property type="evidence" value="ECO:0000315"/>
    <property type="project" value="MGI"/>
</dbReference>
<dbReference type="GO" id="GO:0006508">
    <property type="term" value="P:proteolysis"/>
    <property type="evidence" value="ECO:0000315"/>
    <property type="project" value="MGI"/>
</dbReference>
<dbReference type="CDD" id="cd00190">
    <property type="entry name" value="Tryp_SPc"/>
    <property type="match status" value="1"/>
</dbReference>
<dbReference type="FunFam" id="2.40.10.10:FF:000105">
    <property type="entry name" value="Inactive serine protease 45"/>
    <property type="match status" value="1"/>
</dbReference>
<dbReference type="FunFam" id="2.40.10.10:FF:000004">
    <property type="entry name" value="Tryptase gamma 1"/>
    <property type="match status" value="1"/>
</dbReference>
<dbReference type="Gene3D" id="2.40.10.10">
    <property type="entry name" value="Trypsin-like serine proteases"/>
    <property type="match status" value="2"/>
</dbReference>
<dbReference type="InterPro" id="IPR009003">
    <property type="entry name" value="Peptidase_S1_PA"/>
</dbReference>
<dbReference type="InterPro" id="IPR043504">
    <property type="entry name" value="Peptidase_S1_PA_chymotrypsin"/>
</dbReference>
<dbReference type="InterPro" id="IPR001314">
    <property type="entry name" value="Peptidase_S1A"/>
</dbReference>
<dbReference type="InterPro" id="IPR051487">
    <property type="entry name" value="Ser/Thr_Proteases_Immune/Dev"/>
</dbReference>
<dbReference type="InterPro" id="IPR001254">
    <property type="entry name" value="Trypsin_dom"/>
</dbReference>
<dbReference type="InterPro" id="IPR018114">
    <property type="entry name" value="TRYPSIN_HIS"/>
</dbReference>
<dbReference type="InterPro" id="IPR033116">
    <property type="entry name" value="TRYPSIN_SER"/>
</dbReference>
<dbReference type="PANTHER" id="PTHR24256">
    <property type="entry name" value="TRYPTASE-RELATED"/>
    <property type="match status" value="1"/>
</dbReference>
<dbReference type="Pfam" id="PF00089">
    <property type="entry name" value="Trypsin"/>
    <property type="match status" value="1"/>
</dbReference>
<dbReference type="PRINTS" id="PR00722">
    <property type="entry name" value="CHYMOTRYPSIN"/>
</dbReference>
<dbReference type="SMART" id="SM00020">
    <property type="entry name" value="Tryp_SPc"/>
    <property type="match status" value="1"/>
</dbReference>
<dbReference type="SUPFAM" id="SSF50494">
    <property type="entry name" value="Trypsin-like serine proteases"/>
    <property type="match status" value="1"/>
</dbReference>
<dbReference type="PROSITE" id="PS50240">
    <property type="entry name" value="TRYPSIN_DOM"/>
    <property type="match status" value="1"/>
</dbReference>
<dbReference type="PROSITE" id="PS00134">
    <property type="entry name" value="TRYPSIN_HIS"/>
    <property type="match status" value="1"/>
</dbReference>
<dbReference type="PROSITE" id="PS00135">
    <property type="entry name" value="TRYPSIN_SER"/>
    <property type="match status" value="1"/>
</dbReference>
<feature type="signal peptide" evidence="2">
    <location>
        <begin position="1"/>
        <end position="26"/>
    </location>
</feature>
<feature type="chain" id="PRO_0000349225" description="Serine protease 28">
    <location>
        <begin position="27"/>
        <end position="274"/>
    </location>
</feature>
<feature type="domain" description="Peptidase S1" evidence="3">
    <location>
        <begin position="31"/>
        <end position="274"/>
    </location>
</feature>
<feature type="active site" description="Charge relay system" evidence="1">
    <location>
        <position position="77"/>
    </location>
</feature>
<feature type="active site" description="Charge relay system" evidence="1">
    <location>
        <position position="124"/>
    </location>
</feature>
<feature type="active site" description="Charge relay system" evidence="1">
    <location>
        <position position="227"/>
    </location>
</feature>
<feature type="glycosylation site" description="N-linked (GlcNAc...) asparagine" evidence="2">
    <location>
        <position position="106"/>
    </location>
</feature>
<feature type="disulfide bond" evidence="3">
    <location>
        <begin position="62"/>
        <end position="78"/>
    </location>
</feature>
<feature type="disulfide bond" evidence="3">
    <location>
        <begin position="158"/>
        <end position="233"/>
    </location>
</feature>
<feature type="disulfide bond" evidence="3">
    <location>
        <begin position="191"/>
        <end position="214"/>
    </location>
</feature>
<feature type="disulfide bond" evidence="3">
    <location>
        <begin position="223"/>
        <end position="251"/>
    </location>
</feature>
<feature type="sequence conflict" description="In Ref. 3; BAE25918." evidence="9" ref="3">
    <original>R</original>
    <variation>C</variation>
    <location>
        <position position="36"/>
    </location>
</feature>
<proteinExistence type="evidence at protein level"/>
<organism>
    <name type="scientific">Mus musculus</name>
    <name type="common">Mouse</name>
    <dbReference type="NCBI Taxonomy" id="10090"/>
    <lineage>
        <taxon>Eukaryota</taxon>
        <taxon>Metazoa</taxon>
        <taxon>Chordata</taxon>
        <taxon>Craniata</taxon>
        <taxon>Vertebrata</taxon>
        <taxon>Euteleostomi</taxon>
        <taxon>Mammalia</taxon>
        <taxon>Eutheria</taxon>
        <taxon>Euarchontoglires</taxon>
        <taxon>Glires</taxon>
        <taxon>Rodentia</taxon>
        <taxon>Myomorpha</taxon>
        <taxon>Muroidea</taxon>
        <taxon>Muridae</taxon>
        <taxon>Murinae</taxon>
        <taxon>Mus</taxon>
        <taxon>Mus</taxon>
    </lineage>
</organism>